<comment type="function">
    <text evidence="1">Peptide chain release factor 1 directs the termination of translation in response to the peptide chain termination codons UAG and UAA.</text>
</comment>
<comment type="subcellular location">
    <subcellularLocation>
        <location evidence="1">Cytoplasm</location>
    </subcellularLocation>
</comment>
<comment type="PTM">
    <text evidence="1">Methylated by PrmC. Methylation increases the termination efficiency of RF1.</text>
</comment>
<comment type="similarity">
    <text evidence="1">Belongs to the prokaryotic/mitochondrial release factor family.</text>
</comment>
<keyword id="KW-0963">Cytoplasm</keyword>
<keyword id="KW-0488">Methylation</keyword>
<keyword id="KW-0648">Protein biosynthesis</keyword>
<keyword id="KW-1185">Reference proteome</keyword>
<name>RF1_MYCM1</name>
<dbReference type="EMBL" id="AE017308">
    <property type="protein sequence ID" value="AAT27676.1"/>
    <property type="molecule type" value="Genomic_DNA"/>
</dbReference>
<dbReference type="RefSeq" id="WP_011264710.1">
    <property type="nucleotide sequence ID" value="NC_006908.1"/>
</dbReference>
<dbReference type="SMR" id="Q6KIA0"/>
<dbReference type="STRING" id="267748.MMOB1900"/>
<dbReference type="KEGG" id="mmo:MMOB1900"/>
<dbReference type="eggNOG" id="COG0216">
    <property type="taxonomic scope" value="Bacteria"/>
</dbReference>
<dbReference type="HOGENOM" id="CLU_036856_0_1_14"/>
<dbReference type="OrthoDB" id="9806673at2"/>
<dbReference type="Proteomes" id="UP000009072">
    <property type="component" value="Chromosome"/>
</dbReference>
<dbReference type="GO" id="GO:0005737">
    <property type="term" value="C:cytoplasm"/>
    <property type="evidence" value="ECO:0007669"/>
    <property type="project" value="UniProtKB-SubCell"/>
</dbReference>
<dbReference type="GO" id="GO:0016149">
    <property type="term" value="F:translation release factor activity, codon specific"/>
    <property type="evidence" value="ECO:0007669"/>
    <property type="project" value="UniProtKB-UniRule"/>
</dbReference>
<dbReference type="FunFam" id="3.30.160.20:FF:000004">
    <property type="entry name" value="Peptide chain release factor 1"/>
    <property type="match status" value="1"/>
</dbReference>
<dbReference type="FunFam" id="3.30.70.1660:FF:000002">
    <property type="entry name" value="Peptide chain release factor 1"/>
    <property type="match status" value="1"/>
</dbReference>
<dbReference type="Gene3D" id="3.30.160.20">
    <property type="match status" value="1"/>
</dbReference>
<dbReference type="Gene3D" id="3.30.70.1660">
    <property type="match status" value="1"/>
</dbReference>
<dbReference type="Gene3D" id="6.10.140.1950">
    <property type="match status" value="1"/>
</dbReference>
<dbReference type="HAMAP" id="MF_00093">
    <property type="entry name" value="Rel_fac_1"/>
    <property type="match status" value="1"/>
</dbReference>
<dbReference type="InterPro" id="IPR005139">
    <property type="entry name" value="PCRF"/>
</dbReference>
<dbReference type="InterPro" id="IPR000352">
    <property type="entry name" value="Pep_chain_release_fac_I"/>
</dbReference>
<dbReference type="InterPro" id="IPR045853">
    <property type="entry name" value="Pep_chain_release_fac_I_sf"/>
</dbReference>
<dbReference type="InterPro" id="IPR050057">
    <property type="entry name" value="Prokaryotic/Mito_RF"/>
</dbReference>
<dbReference type="InterPro" id="IPR004373">
    <property type="entry name" value="RF-1"/>
</dbReference>
<dbReference type="NCBIfam" id="TIGR00019">
    <property type="entry name" value="prfA"/>
    <property type="match status" value="1"/>
</dbReference>
<dbReference type="NCBIfam" id="NF001859">
    <property type="entry name" value="PRK00591.1"/>
    <property type="match status" value="1"/>
</dbReference>
<dbReference type="PANTHER" id="PTHR43804">
    <property type="entry name" value="LD18447P"/>
    <property type="match status" value="1"/>
</dbReference>
<dbReference type="PANTHER" id="PTHR43804:SF7">
    <property type="entry name" value="LD18447P"/>
    <property type="match status" value="1"/>
</dbReference>
<dbReference type="Pfam" id="PF03462">
    <property type="entry name" value="PCRF"/>
    <property type="match status" value="1"/>
</dbReference>
<dbReference type="Pfam" id="PF00472">
    <property type="entry name" value="RF-1"/>
    <property type="match status" value="1"/>
</dbReference>
<dbReference type="SMART" id="SM00937">
    <property type="entry name" value="PCRF"/>
    <property type="match status" value="1"/>
</dbReference>
<dbReference type="SUPFAM" id="SSF75620">
    <property type="entry name" value="Release factor"/>
    <property type="match status" value="1"/>
</dbReference>
<dbReference type="PROSITE" id="PS00745">
    <property type="entry name" value="RF_PROK_I"/>
    <property type="match status" value="1"/>
</dbReference>
<organism>
    <name type="scientific">Mycoplasma mobile (strain ATCC 43663 / 163K / NCTC 11711)</name>
    <name type="common">Mesomycoplasma mobile</name>
    <dbReference type="NCBI Taxonomy" id="267748"/>
    <lineage>
        <taxon>Bacteria</taxon>
        <taxon>Bacillati</taxon>
        <taxon>Mycoplasmatota</taxon>
        <taxon>Mycoplasmoidales</taxon>
        <taxon>Metamycoplasmataceae</taxon>
        <taxon>Mesomycoplasma</taxon>
    </lineage>
</organism>
<evidence type="ECO:0000255" key="1">
    <source>
        <dbReference type="HAMAP-Rule" id="MF_00093"/>
    </source>
</evidence>
<sequence length="358" mass="40514">MEDTLYKSLKSIKEKYDSNEKKLLLPEVFNNIKEYTKISKENNSISEIVENFNKFLINEQTIKDAKILLDEKDEEMVSFAKNEIHKSELENQELEKKLRILILPKDENDERNVIIEIRGAAGGDEANIFAGDLLKMYNKWADINKMKLKLLDYANASSGGFSQVTFLVEGDKAYSKLKFESGVHRVQRIPVTETQGRVHTSTTTVTVMPEVDDVAEVEINPVDLKIDTFRSSGPGGQSVNTTDSAVRITHLPSGIVVSSQDEKSQISNRESALKILKSKLYDLEIKKRNEETGKFRKLAGSGARSEKIRTYNYPQDRITDHRIGFSTSLKIAMEGKINNIIEALHAEEQAEKIKEANL</sequence>
<accession>Q6KIA0</accession>
<protein>
    <recommendedName>
        <fullName evidence="1">Peptide chain release factor 1</fullName>
        <shortName evidence="1">RF-1</shortName>
    </recommendedName>
</protein>
<gene>
    <name evidence="1" type="primary">prfA</name>
    <name type="ordered locus">MMOB1900</name>
</gene>
<reference key="1">
    <citation type="journal article" date="2004" name="Genome Res.">
        <title>The complete genome and proteome of Mycoplasma mobile.</title>
        <authorList>
            <person name="Jaffe J.D."/>
            <person name="Stange-Thomann N."/>
            <person name="Smith C."/>
            <person name="DeCaprio D."/>
            <person name="Fisher S."/>
            <person name="Butler J."/>
            <person name="Calvo S."/>
            <person name="Elkins T."/>
            <person name="FitzGerald M.G."/>
            <person name="Hafez N."/>
            <person name="Kodira C.D."/>
            <person name="Major J."/>
            <person name="Wang S."/>
            <person name="Wilkinson J."/>
            <person name="Nicol R."/>
            <person name="Nusbaum C."/>
            <person name="Birren B."/>
            <person name="Berg H.C."/>
            <person name="Church G.M."/>
        </authorList>
    </citation>
    <scope>NUCLEOTIDE SEQUENCE [LARGE SCALE GENOMIC DNA]</scope>
    <source>
        <strain>ATCC 43663 / NCTC 11711 / 163 K</strain>
    </source>
</reference>
<feature type="chain" id="PRO_0000177705" description="Peptide chain release factor 1">
    <location>
        <begin position="1"/>
        <end position="358"/>
    </location>
</feature>
<feature type="modified residue" description="N5-methylglutamine" evidence="1">
    <location>
        <position position="237"/>
    </location>
</feature>
<proteinExistence type="inferred from homology"/>